<gene>
    <name evidence="1" type="primary">prfB</name>
    <name type="ordered locus">EcHS_A3050</name>
</gene>
<feature type="chain" id="PRO_1000057623" description="Peptide chain release factor 2">
    <location>
        <begin position="1"/>
        <end position="365"/>
    </location>
</feature>
<feature type="modified residue" description="N5-methylglutamine" evidence="1">
    <location>
        <position position="252"/>
    </location>
</feature>
<protein>
    <recommendedName>
        <fullName evidence="1">Peptide chain release factor 2</fullName>
        <shortName evidence="1">RF-2</shortName>
    </recommendedName>
</protein>
<reference key="1">
    <citation type="journal article" date="2008" name="J. Bacteriol.">
        <title>The pangenome structure of Escherichia coli: comparative genomic analysis of E. coli commensal and pathogenic isolates.</title>
        <authorList>
            <person name="Rasko D.A."/>
            <person name="Rosovitz M.J."/>
            <person name="Myers G.S.A."/>
            <person name="Mongodin E.F."/>
            <person name="Fricke W.F."/>
            <person name="Gajer P."/>
            <person name="Crabtree J."/>
            <person name="Sebaihia M."/>
            <person name="Thomson N.R."/>
            <person name="Chaudhuri R."/>
            <person name="Henderson I.R."/>
            <person name="Sperandio V."/>
            <person name="Ravel J."/>
        </authorList>
    </citation>
    <scope>NUCLEOTIDE SEQUENCE [LARGE SCALE GENOMIC DNA]</scope>
    <source>
        <strain>HS</strain>
    </source>
</reference>
<comment type="function">
    <text evidence="1">Peptide chain release factor 2 directs the termination of translation in response to the peptide chain termination codons UGA and UAA.</text>
</comment>
<comment type="subcellular location">
    <subcellularLocation>
        <location evidence="1">Cytoplasm</location>
    </subcellularLocation>
</comment>
<comment type="PTM">
    <text evidence="1">Methylated by PrmC. Methylation increases the termination efficiency of RF2.</text>
</comment>
<comment type="similarity">
    <text evidence="1">Belongs to the prokaryotic/mitochondrial release factor family.</text>
</comment>
<dbReference type="EMBL" id="CP000802">
    <property type="protein sequence ID" value="ABV07286.1"/>
    <property type="molecule type" value="Genomic_DNA"/>
</dbReference>
<dbReference type="SMR" id="A8A432"/>
<dbReference type="KEGG" id="ecx:EcHS_A3050"/>
<dbReference type="HOGENOM" id="CLU_220733_1_0_6"/>
<dbReference type="GO" id="GO:0005737">
    <property type="term" value="C:cytoplasm"/>
    <property type="evidence" value="ECO:0007669"/>
    <property type="project" value="UniProtKB-SubCell"/>
</dbReference>
<dbReference type="GO" id="GO:0016149">
    <property type="term" value="F:translation release factor activity, codon specific"/>
    <property type="evidence" value="ECO:0007669"/>
    <property type="project" value="UniProtKB-UniRule"/>
</dbReference>
<dbReference type="FunFam" id="1.20.58.410:FF:000001">
    <property type="entry name" value="Peptide chain release factor 2"/>
    <property type="match status" value="1"/>
</dbReference>
<dbReference type="FunFam" id="3.30.160.20:FF:000010">
    <property type="entry name" value="Peptide chain release factor 2"/>
    <property type="match status" value="1"/>
</dbReference>
<dbReference type="Gene3D" id="3.30.160.20">
    <property type="match status" value="1"/>
</dbReference>
<dbReference type="Gene3D" id="3.30.70.1660">
    <property type="match status" value="1"/>
</dbReference>
<dbReference type="Gene3D" id="1.20.58.410">
    <property type="entry name" value="Release factor"/>
    <property type="match status" value="1"/>
</dbReference>
<dbReference type="HAMAP" id="MF_00094">
    <property type="entry name" value="Rel_fac_2"/>
    <property type="match status" value="1"/>
</dbReference>
<dbReference type="InterPro" id="IPR005139">
    <property type="entry name" value="PCRF"/>
</dbReference>
<dbReference type="InterPro" id="IPR000352">
    <property type="entry name" value="Pep_chain_release_fac_I"/>
</dbReference>
<dbReference type="InterPro" id="IPR045853">
    <property type="entry name" value="Pep_chain_release_fac_I_sf"/>
</dbReference>
<dbReference type="InterPro" id="IPR004374">
    <property type="entry name" value="PrfB"/>
</dbReference>
<dbReference type="NCBIfam" id="TIGR00020">
    <property type="entry name" value="prfB"/>
    <property type="match status" value="1"/>
</dbReference>
<dbReference type="PANTHER" id="PTHR43116:SF3">
    <property type="entry name" value="CLASS I PEPTIDE CHAIN RELEASE FACTOR"/>
    <property type="match status" value="1"/>
</dbReference>
<dbReference type="PANTHER" id="PTHR43116">
    <property type="entry name" value="PEPTIDE CHAIN RELEASE FACTOR 2"/>
    <property type="match status" value="1"/>
</dbReference>
<dbReference type="Pfam" id="PF03462">
    <property type="entry name" value="PCRF"/>
    <property type="match status" value="1"/>
</dbReference>
<dbReference type="Pfam" id="PF00472">
    <property type="entry name" value="RF-1"/>
    <property type="match status" value="1"/>
</dbReference>
<dbReference type="SMART" id="SM00937">
    <property type="entry name" value="PCRF"/>
    <property type="match status" value="1"/>
</dbReference>
<dbReference type="SUPFAM" id="SSF75620">
    <property type="entry name" value="Release factor"/>
    <property type="match status" value="1"/>
</dbReference>
<dbReference type="PROSITE" id="PS00745">
    <property type="entry name" value="RF_PROK_I"/>
    <property type="match status" value="1"/>
</dbReference>
<evidence type="ECO:0000255" key="1">
    <source>
        <dbReference type="HAMAP-Rule" id="MF_00094"/>
    </source>
</evidence>
<accession>A8A432</accession>
<proteinExistence type="inferred from homology"/>
<sequence length="365" mass="41209">MFEINPVNNRIQDLTERSDVLRGYLCYDAKKERLEEVNAELEQPDVWNEPERAQALGKERSSLEAVVDTLDQMKQGLEDVSGLLELAVEADDEETFNEAVAELDALEEKLAQLEFRRMFSGEYDSADCYLDIQAGSGGTEAQDWASMLERMYLRWAESRGFKTEIIEESEGEVAGIKSVTIKISGDYAYGWLRTETGVHRLVRKSPFDSGGRRHTSFSSAFVYPEVDDDIDIEINPADLRIDVYRASGAGGQHVNRTESAVRITHIPTGIVTQCQNDRSQHKNKDQAMKQMKAKLYELEMQKKNAEKQAMEDNKSDIGWGSQIRSYVLDDSRIKDLRTGVETRNTQAVLDGSLDQFIEASLKAGL</sequence>
<organism>
    <name type="scientific">Escherichia coli O9:H4 (strain HS)</name>
    <dbReference type="NCBI Taxonomy" id="331112"/>
    <lineage>
        <taxon>Bacteria</taxon>
        <taxon>Pseudomonadati</taxon>
        <taxon>Pseudomonadota</taxon>
        <taxon>Gammaproteobacteria</taxon>
        <taxon>Enterobacterales</taxon>
        <taxon>Enterobacteriaceae</taxon>
        <taxon>Escherichia</taxon>
    </lineage>
</organism>
<keyword id="KW-0963">Cytoplasm</keyword>
<keyword id="KW-0488">Methylation</keyword>
<keyword id="KW-0648">Protein biosynthesis</keyword>
<name>RF2_ECOHS</name>